<name>RL24_OCEIH</name>
<feature type="chain" id="PRO_0000130688" description="Large ribosomal subunit protein uL24">
    <location>
        <begin position="1"/>
        <end position="103"/>
    </location>
</feature>
<proteinExistence type="inferred from homology"/>
<accession>Q8ETX2</accession>
<protein>
    <recommendedName>
        <fullName evidence="1">Large ribosomal subunit protein uL24</fullName>
    </recommendedName>
    <alternativeName>
        <fullName evidence="2">50S ribosomal protein L24</fullName>
    </alternativeName>
</protein>
<gene>
    <name evidence="1" type="primary">rplX</name>
    <name type="ordered locus">OB0130</name>
</gene>
<dbReference type="EMBL" id="BA000028">
    <property type="protein sequence ID" value="BAC12086.1"/>
    <property type="molecule type" value="Genomic_DNA"/>
</dbReference>
<dbReference type="RefSeq" id="WP_011064533.1">
    <property type="nucleotide sequence ID" value="NC_004193.1"/>
</dbReference>
<dbReference type="SMR" id="Q8ETX2"/>
<dbReference type="STRING" id="221109.gene:10732320"/>
<dbReference type="KEGG" id="oih:OB0130"/>
<dbReference type="eggNOG" id="COG0198">
    <property type="taxonomic scope" value="Bacteria"/>
</dbReference>
<dbReference type="HOGENOM" id="CLU_093315_2_0_9"/>
<dbReference type="OrthoDB" id="9807419at2"/>
<dbReference type="PhylomeDB" id="Q8ETX2"/>
<dbReference type="Proteomes" id="UP000000822">
    <property type="component" value="Chromosome"/>
</dbReference>
<dbReference type="GO" id="GO:1990904">
    <property type="term" value="C:ribonucleoprotein complex"/>
    <property type="evidence" value="ECO:0007669"/>
    <property type="project" value="UniProtKB-KW"/>
</dbReference>
<dbReference type="GO" id="GO:0005840">
    <property type="term" value="C:ribosome"/>
    <property type="evidence" value="ECO:0007669"/>
    <property type="project" value="UniProtKB-KW"/>
</dbReference>
<dbReference type="GO" id="GO:0019843">
    <property type="term" value="F:rRNA binding"/>
    <property type="evidence" value="ECO:0007669"/>
    <property type="project" value="UniProtKB-UniRule"/>
</dbReference>
<dbReference type="GO" id="GO:0003735">
    <property type="term" value="F:structural constituent of ribosome"/>
    <property type="evidence" value="ECO:0007669"/>
    <property type="project" value="InterPro"/>
</dbReference>
<dbReference type="GO" id="GO:0006412">
    <property type="term" value="P:translation"/>
    <property type="evidence" value="ECO:0007669"/>
    <property type="project" value="UniProtKB-UniRule"/>
</dbReference>
<dbReference type="CDD" id="cd06089">
    <property type="entry name" value="KOW_RPL26"/>
    <property type="match status" value="1"/>
</dbReference>
<dbReference type="FunFam" id="2.30.30.30:FF:000004">
    <property type="entry name" value="50S ribosomal protein L24"/>
    <property type="match status" value="1"/>
</dbReference>
<dbReference type="Gene3D" id="2.30.30.30">
    <property type="match status" value="1"/>
</dbReference>
<dbReference type="HAMAP" id="MF_01326_B">
    <property type="entry name" value="Ribosomal_uL24_B"/>
    <property type="match status" value="1"/>
</dbReference>
<dbReference type="InterPro" id="IPR005824">
    <property type="entry name" value="KOW"/>
</dbReference>
<dbReference type="InterPro" id="IPR014722">
    <property type="entry name" value="Rib_uL2_dom2"/>
</dbReference>
<dbReference type="InterPro" id="IPR003256">
    <property type="entry name" value="Ribosomal_uL24"/>
</dbReference>
<dbReference type="InterPro" id="IPR005825">
    <property type="entry name" value="Ribosomal_uL24_CS"/>
</dbReference>
<dbReference type="InterPro" id="IPR041988">
    <property type="entry name" value="Ribosomal_uL24_KOW"/>
</dbReference>
<dbReference type="InterPro" id="IPR008991">
    <property type="entry name" value="Translation_prot_SH3-like_sf"/>
</dbReference>
<dbReference type="NCBIfam" id="TIGR01079">
    <property type="entry name" value="rplX_bact"/>
    <property type="match status" value="1"/>
</dbReference>
<dbReference type="PANTHER" id="PTHR12903">
    <property type="entry name" value="MITOCHONDRIAL RIBOSOMAL PROTEIN L24"/>
    <property type="match status" value="1"/>
</dbReference>
<dbReference type="Pfam" id="PF00467">
    <property type="entry name" value="KOW"/>
    <property type="match status" value="1"/>
</dbReference>
<dbReference type="Pfam" id="PF17136">
    <property type="entry name" value="ribosomal_L24"/>
    <property type="match status" value="1"/>
</dbReference>
<dbReference type="SMART" id="SM00739">
    <property type="entry name" value="KOW"/>
    <property type="match status" value="1"/>
</dbReference>
<dbReference type="SUPFAM" id="SSF50104">
    <property type="entry name" value="Translation proteins SH3-like domain"/>
    <property type="match status" value="1"/>
</dbReference>
<dbReference type="PROSITE" id="PS01108">
    <property type="entry name" value="RIBOSOMAL_L24"/>
    <property type="match status" value="1"/>
</dbReference>
<comment type="function">
    <text evidence="1">One of two assembly initiator proteins, it binds directly to the 5'-end of the 23S rRNA, where it nucleates assembly of the 50S subunit.</text>
</comment>
<comment type="function">
    <text evidence="1">One of the proteins that surrounds the polypeptide exit tunnel on the outside of the subunit.</text>
</comment>
<comment type="subunit">
    <text evidence="1">Part of the 50S ribosomal subunit.</text>
</comment>
<comment type="similarity">
    <text evidence="1">Belongs to the universal ribosomal protein uL24 family.</text>
</comment>
<evidence type="ECO:0000255" key="1">
    <source>
        <dbReference type="HAMAP-Rule" id="MF_01326"/>
    </source>
</evidence>
<evidence type="ECO:0000305" key="2"/>
<sequence length="103" mass="11204">MHVKKGDKVKVLSGKDRGKEGTVLEAFPKNERVLVEGVNMVQKHAKPSQENPQGGILNIEAPIHVSNVLPVDPKSGEPTRVGYEVKDGKKIRIAKKSGEALDK</sequence>
<keyword id="KW-1185">Reference proteome</keyword>
<keyword id="KW-0687">Ribonucleoprotein</keyword>
<keyword id="KW-0689">Ribosomal protein</keyword>
<keyword id="KW-0694">RNA-binding</keyword>
<keyword id="KW-0699">rRNA-binding</keyword>
<reference key="1">
    <citation type="journal article" date="2002" name="Nucleic Acids Res.">
        <title>Genome sequence of Oceanobacillus iheyensis isolated from the Iheya Ridge and its unexpected adaptive capabilities to extreme environments.</title>
        <authorList>
            <person name="Takami H."/>
            <person name="Takaki Y."/>
            <person name="Uchiyama I."/>
        </authorList>
    </citation>
    <scope>NUCLEOTIDE SEQUENCE [LARGE SCALE GENOMIC DNA]</scope>
    <source>
        <strain>DSM 14371 / CIP 107618 / JCM 11309 / KCTC 3954 / HTE831</strain>
    </source>
</reference>
<organism>
    <name type="scientific">Oceanobacillus iheyensis (strain DSM 14371 / CIP 107618 / JCM 11309 / KCTC 3954 / HTE831)</name>
    <dbReference type="NCBI Taxonomy" id="221109"/>
    <lineage>
        <taxon>Bacteria</taxon>
        <taxon>Bacillati</taxon>
        <taxon>Bacillota</taxon>
        <taxon>Bacilli</taxon>
        <taxon>Bacillales</taxon>
        <taxon>Bacillaceae</taxon>
        <taxon>Oceanobacillus</taxon>
    </lineage>
</organism>